<dbReference type="EC" id="2.1.1.199" evidence="1"/>
<dbReference type="EMBL" id="CP000038">
    <property type="protein sequence ID" value="AAZ86885.1"/>
    <property type="molecule type" value="Genomic_DNA"/>
</dbReference>
<dbReference type="RefSeq" id="WP_000970486.1">
    <property type="nucleotide sequence ID" value="NC_007384.1"/>
</dbReference>
<dbReference type="SMR" id="Q3Z5S7"/>
<dbReference type="GeneID" id="93777352"/>
<dbReference type="KEGG" id="ssn:SSON_0090"/>
<dbReference type="HOGENOM" id="CLU_038422_2_0_6"/>
<dbReference type="Proteomes" id="UP000002529">
    <property type="component" value="Chromosome"/>
</dbReference>
<dbReference type="GO" id="GO:0005737">
    <property type="term" value="C:cytoplasm"/>
    <property type="evidence" value="ECO:0007669"/>
    <property type="project" value="UniProtKB-SubCell"/>
</dbReference>
<dbReference type="GO" id="GO:0071424">
    <property type="term" value="F:rRNA (cytosine-N4-)-methyltransferase activity"/>
    <property type="evidence" value="ECO:0007669"/>
    <property type="project" value="UniProtKB-UniRule"/>
</dbReference>
<dbReference type="GO" id="GO:0070475">
    <property type="term" value="P:rRNA base methylation"/>
    <property type="evidence" value="ECO:0007669"/>
    <property type="project" value="UniProtKB-UniRule"/>
</dbReference>
<dbReference type="FunFam" id="1.10.150.170:FF:000001">
    <property type="entry name" value="Ribosomal RNA small subunit methyltransferase H"/>
    <property type="match status" value="1"/>
</dbReference>
<dbReference type="Gene3D" id="1.10.150.170">
    <property type="entry name" value="Putative methyltransferase TM0872, insert domain"/>
    <property type="match status" value="1"/>
</dbReference>
<dbReference type="Gene3D" id="3.40.50.150">
    <property type="entry name" value="Vaccinia Virus protein VP39"/>
    <property type="match status" value="1"/>
</dbReference>
<dbReference type="HAMAP" id="MF_01007">
    <property type="entry name" value="16SrRNA_methyltr_H"/>
    <property type="match status" value="1"/>
</dbReference>
<dbReference type="InterPro" id="IPR002903">
    <property type="entry name" value="RsmH"/>
</dbReference>
<dbReference type="InterPro" id="IPR023397">
    <property type="entry name" value="SAM-dep_MeTrfase_MraW_recog"/>
</dbReference>
<dbReference type="InterPro" id="IPR029063">
    <property type="entry name" value="SAM-dependent_MTases_sf"/>
</dbReference>
<dbReference type="NCBIfam" id="TIGR00006">
    <property type="entry name" value="16S rRNA (cytosine(1402)-N(4))-methyltransferase RsmH"/>
    <property type="match status" value="1"/>
</dbReference>
<dbReference type="PANTHER" id="PTHR11265:SF0">
    <property type="entry name" value="12S RRNA N4-METHYLCYTIDINE METHYLTRANSFERASE"/>
    <property type="match status" value="1"/>
</dbReference>
<dbReference type="PANTHER" id="PTHR11265">
    <property type="entry name" value="S-ADENOSYL-METHYLTRANSFERASE MRAW"/>
    <property type="match status" value="1"/>
</dbReference>
<dbReference type="Pfam" id="PF01795">
    <property type="entry name" value="Methyltransf_5"/>
    <property type="match status" value="1"/>
</dbReference>
<dbReference type="PIRSF" id="PIRSF004486">
    <property type="entry name" value="MraW"/>
    <property type="match status" value="1"/>
</dbReference>
<dbReference type="SUPFAM" id="SSF81799">
    <property type="entry name" value="Putative methyltransferase TM0872, insert domain"/>
    <property type="match status" value="1"/>
</dbReference>
<dbReference type="SUPFAM" id="SSF53335">
    <property type="entry name" value="S-adenosyl-L-methionine-dependent methyltransferases"/>
    <property type="match status" value="1"/>
</dbReference>
<gene>
    <name evidence="1" type="primary">rsmH</name>
    <name type="synonym">mraW</name>
    <name type="ordered locus">SSON_0090</name>
</gene>
<reference key="1">
    <citation type="journal article" date="2005" name="Nucleic Acids Res.">
        <title>Genome dynamics and diversity of Shigella species, the etiologic agents of bacillary dysentery.</title>
        <authorList>
            <person name="Yang F."/>
            <person name="Yang J."/>
            <person name="Zhang X."/>
            <person name="Chen L."/>
            <person name="Jiang Y."/>
            <person name="Yan Y."/>
            <person name="Tang X."/>
            <person name="Wang J."/>
            <person name="Xiong Z."/>
            <person name="Dong J."/>
            <person name="Xue Y."/>
            <person name="Zhu Y."/>
            <person name="Xu X."/>
            <person name="Sun L."/>
            <person name="Chen S."/>
            <person name="Nie H."/>
            <person name="Peng J."/>
            <person name="Xu J."/>
            <person name="Wang Y."/>
            <person name="Yuan Z."/>
            <person name="Wen Y."/>
            <person name="Yao Z."/>
            <person name="Shen Y."/>
            <person name="Qiang B."/>
            <person name="Hou Y."/>
            <person name="Yu J."/>
            <person name="Jin Q."/>
        </authorList>
    </citation>
    <scope>NUCLEOTIDE SEQUENCE [LARGE SCALE GENOMIC DNA]</scope>
    <source>
        <strain>Ss046</strain>
    </source>
</reference>
<protein>
    <recommendedName>
        <fullName evidence="1">Ribosomal RNA small subunit methyltransferase H</fullName>
        <ecNumber evidence="1">2.1.1.199</ecNumber>
    </recommendedName>
    <alternativeName>
        <fullName evidence="1">16S rRNA m(4)C1402 methyltransferase</fullName>
    </alternativeName>
    <alternativeName>
        <fullName evidence="1">rRNA (cytosine-N(4)-)-methyltransferase RsmH</fullName>
    </alternativeName>
</protein>
<keyword id="KW-0963">Cytoplasm</keyword>
<keyword id="KW-0489">Methyltransferase</keyword>
<keyword id="KW-1185">Reference proteome</keyword>
<keyword id="KW-0698">rRNA processing</keyword>
<keyword id="KW-0949">S-adenosyl-L-methionine</keyword>
<keyword id="KW-0808">Transferase</keyword>
<evidence type="ECO:0000255" key="1">
    <source>
        <dbReference type="HAMAP-Rule" id="MF_01007"/>
    </source>
</evidence>
<comment type="function">
    <text evidence="1">Specifically methylates the N4 position of cytidine in position 1402 (C1402) of 16S rRNA.</text>
</comment>
<comment type="catalytic activity">
    <reaction evidence="1">
        <text>cytidine(1402) in 16S rRNA + S-adenosyl-L-methionine = N(4)-methylcytidine(1402) in 16S rRNA + S-adenosyl-L-homocysteine + H(+)</text>
        <dbReference type="Rhea" id="RHEA:42928"/>
        <dbReference type="Rhea" id="RHEA-COMP:10286"/>
        <dbReference type="Rhea" id="RHEA-COMP:10287"/>
        <dbReference type="ChEBI" id="CHEBI:15378"/>
        <dbReference type="ChEBI" id="CHEBI:57856"/>
        <dbReference type="ChEBI" id="CHEBI:59789"/>
        <dbReference type="ChEBI" id="CHEBI:74506"/>
        <dbReference type="ChEBI" id="CHEBI:82748"/>
        <dbReference type="EC" id="2.1.1.199"/>
    </reaction>
</comment>
<comment type="subcellular location">
    <subcellularLocation>
        <location evidence="1">Cytoplasm</location>
    </subcellularLocation>
</comment>
<comment type="similarity">
    <text evidence="1">Belongs to the methyltransferase superfamily. RsmH family.</text>
</comment>
<accession>Q3Z5S7</accession>
<name>RSMH_SHISS</name>
<sequence length="313" mass="34906">MMENYKHTTVLLDEAVNGLNIRPDGIYIDGTFGRGGHSRLILSQLGEEGRLLAIDRDPQAIAVAKTIDDPRFSIIHGPFSALGEYVAERDLIGKIDGILLDLGVSSPQLDDAERGFSFMRDGPLDMRMDPTRGQSAAEWLQTAEEADIAWVLKTYGEERFAKRIARAIVERNREQPMTRTKELAEVVAVATPVKDKFKHPATRTFQAVRIWVNSELEEIEQALKSSLNVLAPGGRLSIISFHSLEDRIVKRFMRENSRGPQVPAGLPMTEEQLKKLGGRQLRALGKLMPGEEEVAENPRARSSVLRIAERTNA</sequence>
<feature type="chain" id="PRO_0000223565" description="Ribosomal RNA small subunit methyltransferase H">
    <location>
        <begin position="1"/>
        <end position="313"/>
    </location>
</feature>
<feature type="binding site" evidence="1">
    <location>
        <begin position="35"/>
        <end position="37"/>
    </location>
    <ligand>
        <name>S-adenosyl-L-methionine</name>
        <dbReference type="ChEBI" id="CHEBI:59789"/>
    </ligand>
</feature>
<feature type="binding site" evidence="1">
    <location>
        <position position="55"/>
    </location>
    <ligand>
        <name>S-adenosyl-L-methionine</name>
        <dbReference type="ChEBI" id="CHEBI:59789"/>
    </ligand>
</feature>
<feature type="binding site" evidence="1">
    <location>
        <position position="79"/>
    </location>
    <ligand>
        <name>S-adenosyl-L-methionine</name>
        <dbReference type="ChEBI" id="CHEBI:59789"/>
    </ligand>
</feature>
<feature type="binding site" evidence="1">
    <location>
        <position position="101"/>
    </location>
    <ligand>
        <name>S-adenosyl-L-methionine</name>
        <dbReference type="ChEBI" id="CHEBI:59789"/>
    </ligand>
</feature>
<feature type="binding site" evidence="1">
    <location>
        <position position="108"/>
    </location>
    <ligand>
        <name>S-adenosyl-L-methionine</name>
        <dbReference type="ChEBI" id="CHEBI:59789"/>
    </ligand>
</feature>
<organism>
    <name type="scientific">Shigella sonnei (strain Ss046)</name>
    <dbReference type="NCBI Taxonomy" id="300269"/>
    <lineage>
        <taxon>Bacteria</taxon>
        <taxon>Pseudomonadati</taxon>
        <taxon>Pseudomonadota</taxon>
        <taxon>Gammaproteobacteria</taxon>
        <taxon>Enterobacterales</taxon>
        <taxon>Enterobacteriaceae</taxon>
        <taxon>Shigella</taxon>
    </lineage>
</organism>
<proteinExistence type="inferred from homology"/>